<organism>
    <name type="scientific">Marinomonas sp. (strain MWYL1)</name>
    <dbReference type="NCBI Taxonomy" id="400668"/>
    <lineage>
        <taxon>Bacteria</taxon>
        <taxon>Pseudomonadati</taxon>
        <taxon>Pseudomonadota</taxon>
        <taxon>Gammaproteobacteria</taxon>
        <taxon>Oceanospirillales</taxon>
        <taxon>Oceanospirillaceae</taxon>
        <taxon>Marinomonas</taxon>
    </lineage>
</organism>
<protein>
    <recommendedName>
        <fullName evidence="1">Large ribosomal subunit protein uL23</fullName>
    </recommendedName>
    <alternativeName>
        <fullName evidence="2">50S ribosomal protein L23</fullName>
    </alternativeName>
</protein>
<dbReference type="EMBL" id="CP000749">
    <property type="protein sequence ID" value="ABR73169.1"/>
    <property type="molecule type" value="Genomic_DNA"/>
</dbReference>
<dbReference type="SMR" id="A6W390"/>
<dbReference type="STRING" id="400668.Mmwyl1_4274"/>
<dbReference type="KEGG" id="mmw:Mmwyl1_4274"/>
<dbReference type="eggNOG" id="COG0089">
    <property type="taxonomic scope" value="Bacteria"/>
</dbReference>
<dbReference type="HOGENOM" id="CLU_037562_3_1_6"/>
<dbReference type="OrthoDB" id="9793353at2"/>
<dbReference type="GO" id="GO:1990904">
    <property type="term" value="C:ribonucleoprotein complex"/>
    <property type="evidence" value="ECO:0007669"/>
    <property type="project" value="UniProtKB-KW"/>
</dbReference>
<dbReference type="GO" id="GO:0005840">
    <property type="term" value="C:ribosome"/>
    <property type="evidence" value="ECO:0007669"/>
    <property type="project" value="UniProtKB-KW"/>
</dbReference>
<dbReference type="GO" id="GO:0019843">
    <property type="term" value="F:rRNA binding"/>
    <property type="evidence" value="ECO:0007669"/>
    <property type="project" value="UniProtKB-UniRule"/>
</dbReference>
<dbReference type="GO" id="GO:0003735">
    <property type="term" value="F:structural constituent of ribosome"/>
    <property type="evidence" value="ECO:0007669"/>
    <property type="project" value="InterPro"/>
</dbReference>
<dbReference type="GO" id="GO:0006412">
    <property type="term" value="P:translation"/>
    <property type="evidence" value="ECO:0007669"/>
    <property type="project" value="UniProtKB-UniRule"/>
</dbReference>
<dbReference type="FunFam" id="3.30.70.330:FF:000001">
    <property type="entry name" value="50S ribosomal protein L23"/>
    <property type="match status" value="1"/>
</dbReference>
<dbReference type="Gene3D" id="3.30.70.330">
    <property type="match status" value="1"/>
</dbReference>
<dbReference type="HAMAP" id="MF_01369_B">
    <property type="entry name" value="Ribosomal_uL23_B"/>
    <property type="match status" value="1"/>
</dbReference>
<dbReference type="InterPro" id="IPR012677">
    <property type="entry name" value="Nucleotide-bd_a/b_plait_sf"/>
</dbReference>
<dbReference type="InterPro" id="IPR013025">
    <property type="entry name" value="Ribosomal_uL23-like"/>
</dbReference>
<dbReference type="InterPro" id="IPR012678">
    <property type="entry name" value="Ribosomal_uL23/eL15/eS24_sf"/>
</dbReference>
<dbReference type="InterPro" id="IPR001014">
    <property type="entry name" value="Ribosomal_uL23_CS"/>
</dbReference>
<dbReference type="NCBIfam" id="NF004359">
    <property type="entry name" value="PRK05738.1-3"/>
    <property type="match status" value="1"/>
</dbReference>
<dbReference type="NCBIfam" id="NF004363">
    <property type="entry name" value="PRK05738.2-4"/>
    <property type="match status" value="1"/>
</dbReference>
<dbReference type="PANTHER" id="PTHR11620">
    <property type="entry name" value="60S RIBOSOMAL PROTEIN L23A"/>
    <property type="match status" value="1"/>
</dbReference>
<dbReference type="Pfam" id="PF00276">
    <property type="entry name" value="Ribosomal_L23"/>
    <property type="match status" value="1"/>
</dbReference>
<dbReference type="SUPFAM" id="SSF54189">
    <property type="entry name" value="Ribosomal proteins S24e, L23 and L15e"/>
    <property type="match status" value="1"/>
</dbReference>
<dbReference type="PROSITE" id="PS00050">
    <property type="entry name" value="RIBOSOMAL_L23"/>
    <property type="match status" value="1"/>
</dbReference>
<proteinExistence type="inferred from homology"/>
<feature type="chain" id="PRO_1000087222" description="Large ribosomal subunit protein uL23">
    <location>
        <begin position="1"/>
        <end position="98"/>
    </location>
</feature>
<accession>A6W390</accession>
<comment type="function">
    <text evidence="1">One of the early assembly proteins it binds 23S rRNA. One of the proteins that surrounds the polypeptide exit tunnel on the outside of the ribosome. Forms the main docking site for trigger factor binding to the ribosome.</text>
</comment>
<comment type="subunit">
    <text evidence="1">Part of the 50S ribosomal subunit. Contacts protein L29, and trigger factor when it is bound to the ribosome.</text>
</comment>
<comment type="similarity">
    <text evidence="1">Belongs to the universal ribosomal protein uL23 family.</text>
</comment>
<sequence length="98" mass="10971">MIGERIYKVLLGPHISEKATIVAEGNGQYVFRVTGDATKPEIKQAIEALFEVKVESVRTLNHKGKTKRTVRGLGKRKDVKKAYVRLAEGQDIDFMVAE</sequence>
<keyword id="KW-0687">Ribonucleoprotein</keyword>
<keyword id="KW-0689">Ribosomal protein</keyword>
<keyword id="KW-0694">RNA-binding</keyword>
<keyword id="KW-0699">rRNA-binding</keyword>
<gene>
    <name evidence="1" type="primary">rplW</name>
    <name type="ordered locus">Mmwyl1_4274</name>
</gene>
<name>RL23_MARMS</name>
<reference key="1">
    <citation type="submission" date="2007-06" db="EMBL/GenBank/DDBJ databases">
        <title>Complete sequence of Marinomonas sp. MWYL1.</title>
        <authorList>
            <consortium name="US DOE Joint Genome Institute"/>
            <person name="Copeland A."/>
            <person name="Lucas S."/>
            <person name="Lapidus A."/>
            <person name="Barry K."/>
            <person name="Glavina del Rio T."/>
            <person name="Dalin E."/>
            <person name="Tice H."/>
            <person name="Pitluck S."/>
            <person name="Kiss H."/>
            <person name="Brettin T."/>
            <person name="Bruce D."/>
            <person name="Detter J.C."/>
            <person name="Han C."/>
            <person name="Schmutz J."/>
            <person name="Larimer F."/>
            <person name="Land M."/>
            <person name="Hauser L."/>
            <person name="Kyrpides N."/>
            <person name="Kim E."/>
            <person name="Johnston A.W.B."/>
            <person name="Todd J.D."/>
            <person name="Rogers R."/>
            <person name="Wexler M."/>
            <person name="Bond P.L."/>
            <person name="Li Y."/>
            <person name="Richardson P."/>
        </authorList>
    </citation>
    <scope>NUCLEOTIDE SEQUENCE [LARGE SCALE GENOMIC DNA]</scope>
    <source>
        <strain>MWYL1</strain>
    </source>
</reference>
<evidence type="ECO:0000255" key="1">
    <source>
        <dbReference type="HAMAP-Rule" id="MF_01369"/>
    </source>
</evidence>
<evidence type="ECO:0000305" key="2"/>